<reference key="1">
    <citation type="journal article" date="2005" name="Nature">
        <title>Virology: independent virus development outside a host.</title>
        <authorList>
            <person name="Haring M."/>
            <person name="Vestergaard G."/>
            <person name="Rachel R."/>
            <person name="Chen L."/>
            <person name="Garrett R.A."/>
            <person name="Prangishvili D."/>
        </authorList>
    </citation>
    <scope>NUCLEOTIDE SEQUENCE [GENOMIC DNA]</scope>
</reference>
<sequence>MLCNFIYALHSCSPDYIMRILTFKFSLFLSFRGKSYATLHIGFSLHHSTIIGENSCPVLLSVTLSLHSFTLYTIGSAPLVSTPRTSQPSSLPVGMNNAFSFNFL</sequence>
<keyword id="KW-1185">Reference proteome</keyword>
<proteinExistence type="predicted"/>
<name>Y104A_ATV</name>
<organism>
    <name type="scientific">Acidianus two-tailed virus</name>
    <name type="common">ATV</name>
    <dbReference type="NCBI Taxonomy" id="315953"/>
    <lineage>
        <taxon>Viruses</taxon>
        <taxon>Viruses incertae sedis</taxon>
        <taxon>Bicaudaviridae</taxon>
        <taxon>Bicaudavirus</taxon>
    </lineage>
</organism>
<feature type="chain" id="PRO_0000389092" description="Uncharacterized protein ORF104a">
    <location>
        <begin position="1"/>
        <end position="104"/>
    </location>
</feature>
<organismHost>
    <name type="scientific">Acidianus convivator</name>
    <dbReference type="NCBI Taxonomy" id="269667"/>
</organismHost>
<dbReference type="EMBL" id="AJ888457">
    <property type="protein sequence ID" value="CAI59845.1"/>
    <property type="molecule type" value="Genomic_DNA"/>
</dbReference>
<dbReference type="RefSeq" id="YP_319839.1">
    <property type="nucleotide sequence ID" value="NC_007409.1"/>
</dbReference>
<dbReference type="GeneID" id="4484220"/>
<dbReference type="KEGG" id="vg:4484220"/>
<dbReference type="Proteomes" id="UP000002150">
    <property type="component" value="Genome"/>
</dbReference>
<accession>Q3V4W9</accession>
<protein>
    <recommendedName>
        <fullName>Uncharacterized protein ORF104a</fullName>
    </recommendedName>
</protein>